<protein>
    <recommendedName>
        <fullName evidence="1">Nucleotide-binding protein NT01CX_1284</fullName>
    </recommendedName>
</protein>
<accession>A0PYB5</accession>
<comment type="function">
    <text evidence="1">Displays ATPase and GTPase activities.</text>
</comment>
<comment type="similarity">
    <text evidence="1">Belongs to the RapZ-like family.</text>
</comment>
<evidence type="ECO:0000255" key="1">
    <source>
        <dbReference type="HAMAP-Rule" id="MF_00636"/>
    </source>
</evidence>
<gene>
    <name type="ordered locus">NT01CX_1284</name>
</gene>
<sequence>MRFVIVTGLSGAGKSQAIRSLEDLGYFCVDNLPPTLMGKFAEACYQTDGKIDKIALVIDIRGGEFFDDLFENLKYLKEQNYRYEILFLDASDKVLVKRYKESRRTHPLAPGGRLIQGIELERRRLNEVKYKANNIIDTSNMTQMQLREKIWRIYGDDEQIENRLIIDVLSFGFKYGIPVDADLVFDVRFLPNPYYIPELKQFSGDDKEIQDYVLGFKETKEFIAKLDDMLKFLIPNYIKEGKIQLVVAIGCTGGRHRSVTIANAIYDRLKEKGHKVSKEHRDINEDIKKGGRKL</sequence>
<proteinExistence type="inferred from homology"/>
<reference key="1">
    <citation type="journal article" date="2006" name="Nat. Biotechnol.">
        <title>The genome and transcriptomes of the anti-tumor agent Clostridium novyi-NT.</title>
        <authorList>
            <person name="Bettegowda C."/>
            <person name="Huang X."/>
            <person name="Lin J."/>
            <person name="Cheong I."/>
            <person name="Kohli M."/>
            <person name="Szabo S.A."/>
            <person name="Zhang X."/>
            <person name="Diaz L.A. Jr."/>
            <person name="Velculescu V.E."/>
            <person name="Parmigiani G."/>
            <person name="Kinzler K.W."/>
            <person name="Vogelstein B."/>
            <person name="Zhou S."/>
        </authorList>
    </citation>
    <scope>NUCLEOTIDE SEQUENCE [LARGE SCALE GENOMIC DNA]</scope>
    <source>
        <strain>NT</strain>
    </source>
</reference>
<organism>
    <name type="scientific">Clostridium novyi (strain NT)</name>
    <dbReference type="NCBI Taxonomy" id="386415"/>
    <lineage>
        <taxon>Bacteria</taxon>
        <taxon>Bacillati</taxon>
        <taxon>Bacillota</taxon>
        <taxon>Clostridia</taxon>
        <taxon>Eubacteriales</taxon>
        <taxon>Clostridiaceae</taxon>
        <taxon>Clostridium</taxon>
    </lineage>
</organism>
<dbReference type="EMBL" id="CP000382">
    <property type="protein sequence ID" value="ABK61376.1"/>
    <property type="molecule type" value="Genomic_DNA"/>
</dbReference>
<dbReference type="SMR" id="A0PYB5"/>
<dbReference type="STRING" id="386415.NT01CX_1284"/>
<dbReference type="KEGG" id="cno:NT01CX_1284"/>
<dbReference type="PATRIC" id="fig|386415.7.peg.392"/>
<dbReference type="eggNOG" id="COG1660">
    <property type="taxonomic scope" value="Bacteria"/>
</dbReference>
<dbReference type="HOGENOM" id="CLU_059558_0_0_9"/>
<dbReference type="Proteomes" id="UP000008220">
    <property type="component" value="Chromosome"/>
</dbReference>
<dbReference type="GO" id="GO:0005524">
    <property type="term" value="F:ATP binding"/>
    <property type="evidence" value="ECO:0007669"/>
    <property type="project" value="UniProtKB-UniRule"/>
</dbReference>
<dbReference type="GO" id="GO:0005525">
    <property type="term" value="F:GTP binding"/>
    <property type="evidence" value="ECO:0007669"/>
    <property type="project" value="UniProtKB-UniRule"/>
</dbReference>
<dbReference type="Gene3D" id="3.40.50.300">
    <property type="entry name" value="P-loop containing nucleotide triphosphate hydrolases"/>
    <property type="match status" value="1"/>
</dbReference>
<dbReference type="HAMAP" id="MF_00636">
    <property type="entry name" value="RapZ_like"/>
    <property type="match status" value="1"/>
</dbReference>
<dbReference type="InterPro" id="IPR027417">
    <property type="entry name" value="P-loop_NTPase"/>
</dbReference>
<dbReference type="InterPro" id="IPR005337">
    <property type="entry name" value="RapZ-like"/>
</dbReference>
<dbReference type="InterPro" id="IPR053930">
    <property type="entry name" value="RapZ-like_N"/>
</dbReference>
<dbReference type="InterPro" id="IPR053931">
    <property type="entry name" value="RapZ_C"/>
</dbReference>
<dbReference type="NCBIfam" id="NF003828">
    <property type="entry name" value="PRK05416.1"/>
    <property type="match status" value="1"/>
</dbReference>
<dbReference type="PANTHER" id="PTHR30448">
    <property type="entry name" value="RNASE ADAPTER PROTEIN RAPZ"/>
    <property type="match status" value="1"/>
</dbReference>
<dbReference type="PANTHER" id="PTHR30448:SF0">
    <property type="entry name" value="RNASE ADAPTER PROTEIN RAPZ"/>
    <property type="match status" value="1"/>
</dbReference>
<dbReference type="Pfam" id="PF22740">
    <property type="entry name" value="PapZ_C"/>
    <property type="match status" value="1"/>
</dbReference>
<dbReference type="Pfam" id="PF03668">
    <property type="entry name" value="RapZ-like_N"/>
    <property type="match status" value="1"/>
</dbReference>
<dbReference type="PIRSF" id="PIRSF005052">
    <property type="entry name" value="P-loopkin"/>
    <property type="match status" value="1"/>
</dbReference>
<dbReference type="SUPFAM" id="SSF52540">
    <property type="entry name" value="P-loop containing nucleoside triphosphate hydrolases"/>
    <property type="match status" value="1"/>
</dbReference>
<keyword id="KW-0067">ATP-binding</keyword>
<keyword id="KW-0342">GTP-binding</keyword>
<keyword id="KW-0547">Nucleotide-binding</keyword>
<keyword id="KW-1185">Reference proteome</keyword>
<feature type="chain" id="PRO_1000056818" description="Nucleotide-binding protein NT01CX_1284">
    <location>
        <begin position="1"/>
        <end position="294"/>
    </location>
</feature>
<feature type="binding site" evidence="1">
    <location>
        <begin position="8"/>
        <end position="15"/>
    </location>
    <ligand>
        <name>ATP</name>
        <dbReference type="ChEBI" id="CHEBI:30616"/>
    </ligand>
</feature>
<feature type="binding site" evidence="1">
    <location>
        <begin position="59"/>
        <end position="62"/>
    </location>
    <ligand>
        <name>GTP</name>
        <dbReference type="ChEBI" id="CHEBI:37565"/>
    </ligand>
</feature>
<name>Y1284_CLONN</name>